<protein>
    <recommendedName>
        <fullName evidence="1">ATP-dependent Clp protease proteolytic subunit</fullName>
        <ecNumber evidence="1">3.4.21.92</ecNumber>
    </recommendedName>
    <alternativeName>
        <fullName evidence="1">Endopeptidase Clp</fullName>
    </alternativeName>
</protein>
<proteinExistence type="inferred from homology"/>
<sequence>MRDPVETYMNLVPMVVEQTNRGERAYDIFSRLLKERIIFVTGPVEDGMSTLTVAQLLFLEAENPKKEISMYINSPGGVVTSGLAIYDTMQFIRPPVSTLCTGQAASMGSLLLAAGHPDMRFSLPNSRIMVHQPSGGFQGQATDIMLHAQEILNLKKRLNEIYVKHTGQTYKAIEDALERDKFLTADMARDFGIVDKVIDKRSEEPTPKAP</sequence>
<gene>
    <name evidence="1" type="primary">clpP</name>
    <name type="ordered locus">RPC_2392</name>
</gene>
<name>CLPP_RHOPB</name>
<accession>Q215J2</accession>
<evidence type="ECO:0000255" key="1">
    <source>
        <dbReference type="HAMAP-Rule" id="MF_00444"/>
    </source>
</evidence>
<feature type="chain" id="PRO_0000252843" description="ATP-dependent Clp protease proteolytic subunit">
    <location>
        <begin position="1"/>
        <end position="210"/>
    </location>
</feature>
<feature type="active site" description="Nucleophile" evidence="1">
    <location>
        <position position="106"/>
    </location>
</feature>
<feature type="active site" evidence="1">
    <location>
        <position position="131"/>
    </location>
</feature>
<comment type="function">
    <text evidence="1">Cleaves peptides in various proteins in a process that requires ATP hydrolysis. Has a chymotrypsin-like activity. Plays a major role in the degradation of misfolded proteins.</text>
</comment>
<comment type="catalytic activity">
    <reaction evidence="1">
        <text>Hydrolysis of proteins to small peptides in the presence of ATP and magnesium. alpha-casein is the usual test substrate. In the absence of ATP, only oligopeptides shorter than five residues are hydrolyzed (such as succinyl-Leu-Tyr-|-NHMec, and Leu-Tyr-Leu-|-Tyr-Trp, in which cleavage of the -Tyr-|-Leu- and -Tyr-|-Trp bonds also occurs).</text>
        <dbReference type="EC" id="3.4.21.92"/>
    </reaction>
</comment>
<comment type="subunit">
    <text evidence="1">Fourteen ClpP subunits assemble into 2 heptameric rings which stack back to back to give a disk-like structure with a central cavity, resembling the structure of eukaryotic proteasomes.</text>
</comment>
<comment type="subcellular location">
    <subcellularLocation>
        <location evidence="1">Cytoplasm</location>
    </subcellularLocation>
</comment>
<comment type="similarity">
    <text evidence="1">Belongs to the peptidase S14 family.</text>
</comment>
<organism>
    <name type="scientific">Rhodopseudomonas palustris (strain BisB18)</name>
    <dbReference type="NCBI Taxonomy" id="316056"/>
    <lineage>
        <taxon>Bacteria</taxon>
        <taxon>Pseudomonadati</taxon>
        <taxon>Pseudomonadota</taxon>
        <taxon>Alphaproteobacteria</taxon>
        <taxon>Hyphomicrobiales</taxon>
        <taxon>Nitrobacteraceae</taxon>
        <taxon>Rhodopseudomonas</taxon>
    </lineage>
</organism>
<dbReference type="EC" id="3.4.21.92" evidence="1"/>
<dbReference type="EMBL" id="CP000301">
    <property type="protein sequence ID" value="ABD87944.1"/>
    <property type="molecule type" value="Genomic_DNA"/>
</dbReference>
<dbReference type="SMR" id="Q215J2"/>
<dbReference type="STRING" id="316056.RPC_2392"/>
<dbReference type="MEROPS" id="S14.001"/>
<dbReference type="KEGG" id="rpc:RPC_2392"/>
<dbReference type="eggNOG" id="COG0740">
    <property type="taxonomic scope" value="Bacteria"/>
</dbReference>
<dbReference type="HOGENOM" id="CLU_058707_3_2_5"/>
<dbReference type="OrthoDB" id="9802800at2"/>
<dbReference type="GO" id="GO:0005737">
    <property type="term" value="C:cytoplasm"/>
    <property type="evidence" value="ECO:0007669"/>
    <property type="project" value="UniProtKB-SubCell"/>
</dbReference>
<dbReference type="GO" id="GO:0009368">
    <property type="term" value="C:endopeptidase Clp complex"/>
    <property type="evidence" value="ECO:0007669"/>
    <property type="project" value="TreeGrafter"/>
</dbReference>
<dbReference type="GO" id="GO:0004176">
    <property type="term" value="F:ATP-dependent peptidase activity"/>
    <property type="evidence" value="ECO:0007669"/>
    <property type="project" value="InterPro"/>
</dbReference>
<dbReference type="GO" id="GO:0051117">
    <property type="term" value="F:ATPase binding"/>
    <property type="evidence" value="ECO:0007669"/>
    <property type="project" value="TreeGrafter"/>
</dbReference>
<dbReference type="GO" id="GO:0004252">
    <property type="term" value="F:serine-type endopeptidase activity"/>
    <property type="evidence" value="ECO:0007669"/>
    <property type="project" value="UniProtKB-UniRule"/>
</dbReference>
<dbReference type="GO" id="GO:0006515">
    <property type="term" value="P:protein quality control for misfolded or incompletely synthesized proteins"/>
    <property type="evidence" value="ECO:0007669"/>
    <property type="project" value="TreeGrafter"/>
</dbReference>
<dbReference type="CDD" id="cd07017">
    <property type="entry name" value="S14_ClpP_2"/>
    <property type="match status" value="1"/>
</dbReference>
<dbReference type="FunFam" id="3.90.226.10:FF:000001">
    <property type="entry name" value="ATP-dependent Clp protease proteolytic subunit"/>
    <property type="match status" value="1"/>
</dbReference>
<dbReference type="Gene3D" id="3.90.226.10">
    <property type="entry name" value="2-enoyl-CoA Hydratase, Chain A, domain 1"/>
    <property type="match status" value="1"/>
</dbReference>
<dbReference type="HAMAP" id="MF_00444">
    <property type="entry name" value="ClpP"/>
    <property type="match status" value="1"/>
</dbReference>
<dbReference type="InterPro" id="IPR001907">
    <property type="entry name" value="ClpP"/>
</dbReference>
<dbReference type="InterPro" id="IPR029045">
    <property type="entry name" value="ClpP/crotonase-like_dom_sf"/>
</dbReference>
<dbReference type="InterPro" id="IPR023562">
    <property type="entry name" value="ClpP/TepA"/>
</dbReference>
<dbReference type="InterPro" id="IPR033135">
    <property type="entry name" value="ClpP_His_AS"/>
</dbReference>
<dbReference type="NCBIfam" id="NF001368">
    <property type="entry name" value="PRK00277.1"/>
    <property type="match status" value="1"/>
</dbReference>
<dbReference type="NCBIfam" id="NF009205">
    <property type="entry name" value="PRK12553.1"/>
    <property type="match status" value="1"/>
</dbReference>
<dbReference type="PANTHER" id="PTHR10381">
    <property type="entry name" value="ATP-DEPENDENT CLP PROTEASE PROTEOLYTIC SUBUNIT"/>
    <property type="match status" value="1"/>
</dbReference>
<dbReference type="PANTHER" id="PTHR10381:SF70">
    <property type="entry name" value="ATP-DEPENDENT CLP PROTEASE PROTEOLYTIC SUBUNIT"/>
    <property type="match status" value="1"/>
</dbReference>
<dbReference type="Pfam" id="PF00574">
    <property type="entry name" value="CLP_protease"/>
    <property type="match status" value="1"/>
</dbReference>
<dbReference type="PRINTS" id="PR00127">
    <property type="entry name" value="CLPPROTEASEP"/>
</dbReference>
<dbReference type="SUPFAM" id="SSF52096">
    <property type="entry name" value="ClpP/crotonase"/>
    <property type="match status" value="1"/>
</dbReference>
<dbReference type="PROSITE" id="PS00382">
    <property type="entry name" value="CLP_PROTEASE_HIS"/>
    <property type="match status" value="1"/>
</dbReference>
<keyword id="KW-0963">Cytoplasm</keyword>
<keyword id="KW-0378">Hydrolase</keyword>
<keyword id="KW-0645">Protease</keyword>
<keyword id="KW-0720">Serine protease</keyword>
<reference key="1">
    <citation type="submission" date="2006-03" db="EMBL/GenBank/DDBJ databases">
        <title>Complete sequence of Rhodopseudomonas palustris BisB18.</title>
        <authorList>
            <consortium name="US DOE Joint Genome Institute"/>
            <person name="Copeland A."/>
            <person name="Lucas S."/>
            <person name="Lapidus A."/>
            <person name="Barry K."/>
            <person name="Detter J.C."/>
            <person name="Glavina del Rio T."/>
            <person name="Hammon N."/>
            <person name="Israni S."/>
            <person name="Dalin E."/>
            <person name="Tice H."/>
            <person name="Pitluck S."/>
            <person name="Chain P."/>
            <person name="Malfatti S."/>
            <person name="Shin M."/>
            <person name="Vergez L."/>
            <person name="Schmutz J."/>
            <person name="Larimer F."/>
            <person name="Land M."/>
            <person name="Hauser L."/>
            <person name="Pelletier D.A."/>
            <person name="Kyrpides N."/>
            <person name="Anderson I."/>
            <person name="Oda Y."/>
            <person name="Harwood C.S."/>
            <person name="Richardson P."/>
        </authorList>
    </citation>
    <scope>NUCLEOTIDE SEQUENCE [LARGE SCALE GENOMIC DNA]</scope>
    <source>
        <strain>BisB18</strain>
    </source>
</reference>